<reference key="1">
    <citation type="submission" date="2008-08" db="EMBL/GenBank/DDBJ databases">
        <title>Complete sequence of Vibrio fischeri strain MJ11.</title>
        <authorList>
            <person name="Mandel M.J."/>
            <person name="Stabb E.V."/>
            <person name="Ruby E.G."/>
            <person name="Ferriera S."/>
            <person name="Johnson J."/>
            <person name="Kravitz S."/>
            <person name="Beeson K."/>
            <person name="Sutton G."/>
            <person name="Rogers Y.-H."/>
            <person name="Friedman R."/>
            <person name="Frazier M."/>
            <person name="Venter J.C."/>
        </authorList>
    </citation>
    <scope>NUCLEOTIDE SEQUENCE [LARGE SCALE GENOMIC DNA]</scope>
    <source>
        <strain>MJ11</strain>
    </source>
</reference>
<protein>
    <recommendedName>
        <fullName evidence="1">Protein-L-isoaspartate O-methyltransferase</fullName>
        <ecNumber evidence="1">2.1.1.77</ecNumber>
    </recommendedName>
    <alternativeName>
        <fullName evidence="1">L-isoaspartyl protein carboxyl methyltransferase</fullName>
    </alternativeName>
    <alternativeName>
        <fullName evidence="1">Protein L-isoaspartyl methyltransferase</fullName>
    </alternativeName>
    <alternativeName>
        <fullName evidence="1">Protein-beta-aspartate methyltransferase</fullName>
        <shortName evidence="1">PIMT</shortName>
    </alternativeName>
</protein>
<sequence length="208" mass="23284">MLNSRSELLDQFLRQQGIRNEAILAAIRELPRERFIPEALSHQAYQNNALPIGEGQTISQPYIVAKMTELLELTPTSNVLEVGTGSGYQTAVLAKLVEHVNSIERIKSLQWNAKRLLKQLDIYNVSTKHGDGWKGWESKGPFDAIIVTAAAESIPNDLLFQLKDNGHLVIPVGEESQQLLRIIRQGEEFFSEVIEEVRFVPLVAGELA</sequence>
<dbReference type="EC" id="2.1.1.77" evidence="1"/>
<dbReference type="EMBL" id="CP001139">
    <property type="protein sequence ID" value="ACH66952.1"/>
    <property type="molecule type" value="Genomic_DNA"/>
</dbReference>
<dbReference type="RefSeq" id="WP_012534092.1">
    <property type="nucleotide sequence ID" value="NC_011184.1"/>
</dbReference>
<dbReference type="SMR" id="B5FAF3"/>
<dbReference type="KEGG" id="vfm:VFMJ11_2175"/>
<dbReference type="HOGENOM" id="CLU_055432_2_0_6"/>
<dbReference type="Proteomes" id="UP000001857">
    <property type="component" value="Chromosome I"/>
</dbReference>
<dbReference type="GO" id="GO:0005737">
    <property type="term" value="C:cytoplasm"/>
    <property type="evidence" value="ECO:0007669"/>
    <property type="project" value="UniProtKB-SubCell"/>
</dbReference>
<dbReference type="GO" id="GO:0004719">
    <property type="term" value="F:protein-L-isoaspartate (D-aspartate) O-methyltransferase activity"/>
    <property type="evidence" value="ECO:0007669"/>
    <property type="project" value="UniProtKB-UniRule"/>
</dbReference>
<dbReference type="GO" id="GO:0032259">
    <property type="term" value="P:methylation"/>
    <property type="evidence" value="ECO:0007669"/>
    <property type="project" value="UniProtKB-KW"/>
</dbReference>
<dbReference type="GO" id="GO:0036211">
    <property type="term" value="P:protein modification process"/>
    <property type="evidence" value="ECO:0007669"/>
    <property type="project" value="UniProtKB-UniRule"/>
</dbReference>
<dbReference type="GO" id="GO:0030091">
    <property type="term" value="P:protein repair"/>
    <property type="evidence" value="ECO:0007669"/>
    <property type="project" value="UniProtKB-UniRule"/>
</dbReference>
<dbReference type="CDD" id="cd02440">
    <property type="entry name" value="AdoMet_MTases"/>
    <property type="match status" value="1"/>
</dbReference>
<dbReference type="FunFam" id="3.40.50.150:FF:000010">
    <property type="entry name" value="Protein-L-isoaspartate O-methyltransferase"/>
    <property type="match status" value="1"/>
</dbReference>
<dbReference type="Gene3D" id="3.40.50.150">
    <property type="entry name" value="Vaccinia Virus protein VP39"/>
    <property type="match status" value="1"/>
</dbReference>
<dbReference type="HAMAP" id="MF_00090">
    <property type="entry name" value="PIMT"/>
    <property type="match status" value="1"/>
</dbReference>
<dbReference type="InterPro" id="IPR000682">
    <property type="entry name" value="PCMT"/>
</dbReference>
<dbReference type="InterPro" id="IPR029063">
    <property type="entry name" value="SAM-dependent_MTases_sf"/>
</dbReference>
<dbReference type="NCBIfam" id="TIGR00080">
    <property type="entry name" value="pimt"/>
    <property type="match status" value="1"/>
</dbReference>
<dbReference type="NCBIfam" id="NF001453">
    <property type="entry name" value="PRK00312.1"/>
    <property type="match status" value="1"/>
</dbReference>
<dbReference type="PANTHER" id="PTHR11579">
    <property type="entry name" value="PROTEIN-L-ISOASPARTATE O-METHYLTRANSFERASE"/>
    <property type="match status" value="1"/>
</dbReference>
<dbReference type="PANTHER" id="PTHR11579:SF0">
    <property type="entry name" value="PROTEIN-L-ISOASPARTATE(D-ASPARTATE) O-METHYLTRANSFERASE"/>
    <property type="match status" value="1"/>
</dbReference>
<dbReference type="Pfam" id="PF01135">
    <property type="entry name" value="PCMT"/>
    <property type="match status" value="1"/>
</dbReference>
<dbReference type="SUPFAM" id="SSF53335">
    <property type="entry name" value="S-adenosyl-L-methionine-dependent methyltransferases"/>
    <property type="match status" value="1"/>
</dbReference>
<dbReference type="PROSITE" id="PS01279">
    <property type="entry name" value="PCMT"/>
    <property type="match status" value="1"/>
</dbReference>
<keyword id="KW-0963">Cytoplasm</keyword>
<keyword id="KW-0489">Methyltransferase</keyword>
<keyword id="KW-0949">S-adenosyl-L-methionine</keyword>
<keyword id="KW-0808">Transferase</keyword>
<organism>
    <name type="scientific">Aliivibrio fischeri (strain MJ11)</name>
    <name type="common">Vibrio fischeri</name>
    <dbReference type="NCBI Taxonomy" id="388396"/>
    <lineage>
        <taxon>Bacteria</taxon>
        <taxon>Pseudomonadati</taxon>
        <taxon>Pseudomonadota</taxon>
        <taxon>Gammaproteobacteria</taxon>
        <taxon>Vibrionales</taxon>
        <taxon>Vibrionaceae</taxon>
        <taxon>Aliivibrio</taxon>
    </lineage>
</organism>
<comment type="function">
    <text evidence="1">Catalyzes the methyl esterification of L-isoaspartyl residues in peptides and proteins that result from spontaneous decomposition of normal L-aspartyl and L-asparaginyl residues. It plays a role in the repair and/or degradation of damaged proteins.</text>
</comment>
<comment type="catalytic activity">
    <reaction evidence="1">
        <text>[protein]-L-isoaspartate + S-adenosyl-L-methionine = [protein]-L-isoaspartate alpha-methyl ester + S-adenosyl-L-homocysteine</text>
        <dbReference type="Rhea" id="RHEA:12705"/>
        <dbReference type="Rhea" id="RHEA-COMP:12143"/>
        <dbReference type="Rhea" id="RHEA-COMP:12144"/>
        <dbReference type="ChEBI" id="CHEBI:57856"/>
        <dbReference type="ChEBI" id="CHEBI:59789"/>
        <dbReference type="ChEBI" id="CHEBI:90596"/>
        <dbReference type="ChEBI" id="CHEBI:90598"/>
        <dbReference type="EC" id="2.1.1.77"/>
    </reaction>
</comment>
<comment type="subcellular location">
    <subcellularLocation>
        <location evidence="1">Cytoplasm</location>
    </subcellularLocation>
</comment>
<comment type="similarity">
    <text evidence="1">Belongs to the methyltransferase superfamily. L-isoaspartyl/D-aspartyl protein methyltransferase family.</text>
</comment>
<gene>
    <name evidence="1" type="primary">pcm</name>
    <name type="ordered locus">VFMJ11_2175</name>
</gene>
<feature type="chain" id="PRO_1000093297" description="Protein-L-isoaspartate O-methyltransferase">
    <location>
        <begin position="1"/>
        <end position="208"/>
    </location>
</feature>
<feature type="active site" evidence="1">
    <location>
        <position position="59"/>
    </location>
</feature>
<proteinExistence type="inferred from homology"/>
<accession>B5FAF3</accession>
<name>PIMT_ALIFM</name>
<evidence type="ECO:0000255" key="1">
    <source>
        <dbReference type="HAMAP-Rule" id="MF_00090"/>
    </source>
</evidence>